<evidence type="ECO:0000250" key="1"/>
<evidence type="ECO:0000255" key="2"/>
<evidence type="ECO:0000255" key="3">
    <source>
        <dbReference type="PROSITE-ProRule" id="PRU00274"/>
    </source>
</evidence>
<evidence type="ECO:0000305" key="4"/>
<comment type="subcellular location">
    <subcellularLocation>
        <location evidence="4">Secreted</location>
    </subcellularLocation>
</comment>
<comment type="similarity">
    <text evidence="3">Belongs to the peptidase S1 family.</text>
</comment>
<sequence length="322" mass="35698">MAALTSGLGVLGYLLFPLLLASPTWVTSVSRRHPKSQANSLSGDVACGQPVLQGKLLGGEFARDRKWPWQVSLHYSGFHICGGSILSAYWVLSAAHCFDRGKKLETYDIYVGITNLEKANRHTQWFEIYQVIIHPTFQMYHPIGGDVALVQLKSAIVFSDFVLPICLPPSDLYLINLSCWTTGWGMISPQGETGNELLEAQLPLIPRFQCQLLYGLSSYLLPEMLCAADIKTMKNVCEGDSGSPLVCKQNQTWLQIGIVSWGRGCAQPLYPGVFANVSYFLSWIRYHLQIIPNPPQILPSLSSSPKNTLIIFVTIMGHLLVL</sequence>
<dbReference type="EC" id="3.4.21.-"/>
<dbReference type="EMBL" id="AK145810">
    <property type="protein sequence ID" value="BAE26664.1"/>
    <property type="molecule type" value="mRNA"/>
</dbReference>
<dbReference type="EMBL" id="BC147400">
    <property type="protein sequence ID" value="AAI47401.1"/>
    <property type="molecule type" value="mRNA"/>
</dbReference>
<dbReference type="EMBL" id="BC147401">
    <property type="protein sequence ID" value="AAI47402.1"/>
    <property type="molecule type" value="mRNA"/>
</dbReference>
<dbReference type="CCDS" id="CCDS36170.1"/>
<dbReference type="RefSeq" id="NP_001038986.1">
    <property type="nucleotide sequence ID" value="NM_001045521.1"/>
</dbReference>
<dbReference type="SMR" id="Q3UKY7"/>
<dbReference type="FunCoup" id="Q3UKY7">
    <property type="interactions" value="47"/>
</dbReference>
<dbReference type="MEROPS" id="S01.324"/>
<dbReference type="GlyCosmos" id="Q3UKY7">
    <property type="glycosylation" value="3 sites, No reported glycans"/>
</dbReference>
<dbReference type="GlyGen" id="Q3UKY7">
    <property type="glycosylation" value="3 sites"/>
</dbReference>
<dbReference type="PhosphoSitePlus" id="Q3UKY7"/>
<dbReference type="PaxDb" id="10090-ENSMUSP00000052010"/>
<dbReference type="ProteomicsDB" id="291903"/>
<dbReference type="Antibodypedia" id="20773">
    <property type="antibodies" value="26 antibodies from 12 providers"/>
</dbReference>
<dbReference type="DNASU" id="216797"/>
<dbReference type="Ensembl" id="ENSMUST00000061481.7">
    <property type="protein sequence ID" value="ENSMUSP00000052010.7"/>
    <property type="gene ID" value="ENSMUSG00000049291.7"/>
</dbReference>
<dbReference type="GeneID" id="216797"/>
<dbReference type="KEGG" id="mmu:216797"/>
<dbReference type="UCSC" id="uc007jdr.1">
    <property type="organism name" value="mouse"/>
</dbReference>
<dbReference type="AGR" id="MGI:2685095"/>
<dbReference type="CTD" id="339501"/>
<dbReference type="MGI" id="MGI:2685095">
    <property type="gene designation" value="Prss38"/>
</dbReference>
<dbReference type="VEuPathDB" id="HostDB:ENSMUSG00000049291"/>
<dbReference type="eggNOG" id="KOG3627">
    <property type="taxonomic scope" value="Eukaryota"/>
</dbReference>
<dbReference type="GeneTree" id="ENSGT00940000154494"/>
<dbReference type="HOGENOM" id="CLU_006842_0_4_1"/>
<dbReference type="InParanoid" id="Q3UKY7"/>
<dbReference type="OMA" id="LVCEFNH"/>
<dbReference type="OrthoDB" id="10002959at2759"/>
<dbReference type="PhylomeDB" id="Q3UKY7"/>
<dbReference type="TreeFam" id="TF351676"/>
<dbReference type="BioGRID-ORCS" id="216797">
    <property type="hits" value="0 hits in 77 CRISPR screens"/>
</dbReference>
<dbReference type="PRO" id="PR:Q3UKY7"/>
<dbReference type="Proteomes" id="UP000000589">
    <property type="component" value="Chromosome 11"/>
</dbReference>
<dbReference type="RNAct" id="Q3UKY7">
    <property type="molecule type" value="protein"/>
</dbReference>
<dbReference type="Bgee" id="ENSMUSG00000049291">
    <property type="expression patterns" value="Expressed in spermatocyte and 11 other cell types or tissues"/>
</dbReference>
<dbReference type="GO" id="GO:0005576">
    <property type="term" value="C:extracellular region"/>
    <property type="evidence" value="ECO:0007669"/>
    <property type="project" value="UniProtKB-SubCell"/>
</dbReference>
<dbReference type="GO" id="GO:0004252">
    <property type="term" value="F:serine-type endopeptidase activity"/>
    <property type="evidence" value="ECO:0007669"/>
    <property type="project" value="InterPro"/>
</dbReference>
<dbReference type="GO" id="GO:0006508">
    <property type="term" value="P:proteolysis"/>
    <property type="evidence" value="ECO:0007669"/>
    <property type="project" value="UniProtKB-KW"/>
</dbReference>
<dbReference type="CDD" id="cd00190">
    <property type="entry name" value="Tryp_SPc"/>
    <property type="match status" value="1"/>
</dbReference>
<dbReference type="FunFam" id="2.40.10.10:FF:000039">
    <property type="entry name" value="Brain-specific serine protease 4"/>
    <property type="match status" value="1"/>
</dbReference>
<dbReference type="Gene3D" id="2.40.10.10">
    <property type="entry name" value="Trypsin-like serine proteases"/>
    <property type="match status" value="1"/>
</dbReference>
<dbReference type="InterPro" id="IPR009003">
    <property type="entry name" value="Peptidase_S1_PA"/>
</dbReference>
<dbReference type="InterPro" id="IPR043504">
    <property type="entry name" value="Peptidase_S1_PA_chymotrypsin"/>
</dbReference>
<dbReference type="InterPro" id="IPR001314">
    <property type="entry name" value="Peptidase_S1A"/>
</dbReference>
<dbReference type="InterPro" id="IPR001254">
    <property type="entry name" value="Trypsin_dom"/>
</dbReference>
<dbReference type="InterPro" id="IPR018114">
    <property type="entry name" value="TRYPSIN_HIS"/>
</dbReference>
<dbReference type="InterPro" id="IPR033116">
    <property type="entry name" value="TRYPSIN_SER"/>
</dbReference>
<dbReference type="PANTHER" id="PTHR24252">
    <property type="entry name" value="ACROSIN-RELATED"/>
    <property type="match status" value="1"/>
</dbReference>
<dbReference type="PANTHER" id="PTHR24252:SF7">
    <property type="entry name" value="HYALIN"/>
    <property type="match status" value="1"/>
</dbReference>
<dbReference type="Pfam" id="PF00089">
    <property type="entry name" value="Trypsin"/>
    <property type="match status" value="1"/>
</dbReference>
<dbReference type="PRINTS" id="PR00722">
    <property type="entry name" value="CHYMOTRYPSIN"/>
</dbReference>
<dbReference type="SMART" id="SM00020">
    <property type="entry name" value="Tryp_SPc"/>
    <property type="match status" value="1"/>
</dbReference>
<dbReference type="SUPFAM" id="SSF50494">
    <property type="entry name" value="Trypsin-like serine proteases"/>
    <property type="match status" value="1"/>
</dbReference>
<dbReference type="PROSITE" id="PS50240">
    <property type="entry name" value="TRYPSIN_DOM"/>
    <property type="match status" value="1"/>
</dbReference>
<dbReference type="PROSITE" id="PS00134">
    <property type="entry name" value="TRYPSIN_HIS"/>
    <property type="match status" value="1"/>
</dbReference>
<dbReference type="PROSITE" id="PS00135">
    <property type="entry name" value="TRYPSIN_SER"/>
    <property type="match status" value="1"/>
</dbReference>
<protein>
    <recommendedName>
        <fullName>Serine protease 38</fullName>
        <ecNumber>3.4.21.-</ecNumber>
    </recommendedName>
    <alternativeName>
        <fullName>Marapsin-2</fullName>
    </alternativeName>
</protein>
<gene>
    <name type="primary">Prss38</name>
    <name type="synonym">Gm249</name>
    <name type="synonym">Mpn2</name>
</gene>
<reference key="1">
    <citation type="journal article" date="2005" name="Science">
        <title>The transcriptional landscape of the mammalian genome.</title>
        <authorList>
            <person name="Carninci P."/>
            <person name="Kasukawa T."/>
            <person name="Katayama S."/>
            <person name="Gough J."/>
            <person name="Frith M.C."/>
            <person name="Maeda N."/>
            <person name="Oyama R."/>
            <person name="Ravasi T."/>
            <person name="Lenhard B."/>
            <person name="Wells C."/>
            <person name="Kodzius R."/>
            <person name="Shimokawa K."/>
            <person name="Bajic V.B."/>
            <person name="Brenner S.E."/>
            <person name="Batalov S."/>
            <person name="Forrest A.R."/>
            <person name="Zavolan M."/>
            <person name="Davis M.J."/>
            <person name="Wilming L.G."/>
            <person name="Aidinis V."/>
            <person name="Allen J.E."/>
            <person name="Ambesi-Impiombato A."/>
            <person name="Apweiler R."/>
            <person name="Aturaliya R.N."/>
            <person name="Bailey T.L."/>
            <person name="Bansal M."/>
            <person name="Baxter L."/>
            <person name="Beisel K.W."/>
            <person name="Bersano T."/>
            <person name="Bono H."/>
            <person name="Chalk A.M."/>
            <person name="Chiu K.P."/>
            <person name="Choudhary V."/>
            <person name="Christoffels A."/>
            <person name="Clutterbuck D.R."/>
            <person name="Crowe M.L."/>
            <person name="Dalla E."/>
            <person name="Dalrymple B.P."/>
            <person name="de Bono B."/>
            <person name="Della Gatta G."/>
            <person name="di Bernardo D."/>
            <person name="Down T."/>
            <person name="Engstrom P."/>
            <person name="Fagiolini M."/>
            <person name="Faulkner G."/>
            <person name="Fletcher C.F."/>
            <person name="Fukushima T."/>
            <person name="Furuno M."/>
            <person name="Futaki S."/>
            <person name="Gariboldi M."/>
            <person name="Georgii-Hemming P."/>
            <person name="Gingeras T.R."/>
            <person name="Gojobori T."/>
            <person name="Green R.E."/>
            <person name="Gustincich S."/>
            <person name="Harbers M."/>
            <person name="Hayashi Y."/>
            <person name="Hensch T.K."/>
            <person name="Hirokawa N."/>
            <person name="Hill D."/>
            <person name="Huminiecki L."/>
            <person name="Iacono M."/>
            <person name="Ikeo K."/>
            <person name="Iwama A."/>
            <person name="Ishikawa T."/>
            <person name="Jakt M."/>
            <person name="Kanapin A."/>
            <person name="Katoh M."/>
            <person name="Kawasawa Y."/>
            <person name="Kelso J."/>
            <person name="Kitamura H."/>
            <person name="Kitano H."/>
            <person name="Kollias G."/>
            <person name="Krishnan S.P."/>
            <person name="Kruger A."/>
            <person name="Kummerfeld S.K."/>
            <person name="Kurochkin I.V."/>
            <person name="Lareau L.F."/>
            <person name="Lazarevic D."/>
            <person name="Lipovich L."/>
            <person name="Liu J."/>
            <person name="Liuni S."/>
            <person name="McWilliam S."/>
            <person name="Madan Babu M."/>
            <person name="Madera M."/>
            <person name="Marchionni L."/>
            <person name="Matsuda H."/>
            <person name="Matsuzawa S."/>
            <person name="Miki H."/>
            <person name="Mignone F."/>
            <person name="Miyake S."/>
            <person name="Morris K."/>
            <person name="Mottagui-Tabar S."/>
            <person name="Mulder N."/>
            <person name="Nakano N."/>
            <person name="Nakauchi H."/>
            <person name="Ng P."/>
            <person name="Nilsson R."/>
            <person name="Nishiguchi S."/>
            <person name="Nishikawa S."/>
            <person name="Nori F."/>
            <person name="Ohara O."/>
            <person name="Okazaki Y."/>
            <person name="Orlando V."/>
            <person name="Pang K.C."/>
            <person name="Pavan W.J."/>
            <person name="Pavesi G."/>
            <person name="Pesole G."/>
            <person name="Petrovsky N."/>
            <person name="Piazza S."/>
            <person name="Reed J."/>
            <person name="Reid J.F."/>
            <person name="Ring B.Z."/>
            <person name="Ringwald M."/>
            <person name="Rost B."/>
            <person name="Ruan Y."/>
            <person name="Salzberg S.L."/>
            <person name="Sandelin A."/>
            <person name="Schneider C."/>
            <person name="Schoenbach C."/>
            <person name="Sekiguchi K."/>
            <person name="Semple C.A."/>
            <person name="Seno S."/>
            <person name="Sessa L."/>
            <person name="Sheng Y."/>
            <person name="Shibata Y."/>
            <person name="Shimada H."/>
            <person name="Shimada K."/>
            <person name="Silva D."/>
            <person name="Sinclair B."/>
            <person name="Sperling S."/>
            <person name="Stupka E."/>
            <person name="Sugiura K."/>
            <person name="Sultana R."/>
            <person name="Takenaka Y."/>
            <person name="Taki K."/>
            <person name="Tammoja K."/>
            <person name="Tan S.L."/>
            <person name="Tang S."/>
            <person name="Taylor M.S."/>
            <person name="Tegner J."/>
            <person name="Teichmann S.A."/>
            <person name="Ueda H.R."/>
            <person name="van Nimwegen E."/>
            <person name="Verardo R."/>
            <person name="Wei C.L."/>
            <person name="Yagi K."/>
            <person name="Yamanishi H."/>
            <person name="Zabarovsky E."/>
            <person name="Zhu S."/>
            <person name="Zimmer A."/>
            <person name="Hide W."/>
            <person name="Bult C."/>
            <person name="Grimmond S.M."/>
            <person name="Teasdale R.D."/>
            <person name="Liu E.T."/>
            <person name="Brusic V."/>
            <person name="Quackenbush J."/>
            <person name="Wahlestedt C."/>
            <person name="Mattick J.S."/>
            <person name="Hume D.A."/>
            <person name="Kai C."/>
            <person name="Sasaki D."/>
            <person name="Tomaru Y."/>
            <person name="Fukuda S."/>
            <person name="Kanamori-Katayama M."/>
            <person name="Suzuki M."/>
            <person name="Aoki J."/>
            <person name="Arakawa T."/>
            <person name="Iida J."/>
            <person name="Imamura K."/>
            <person name="Itoh M."/>
            <person name="Kato T."/>
            <person name="Kawaji H."/>
            <person name="Kawagashira N."/>
            <person name="Kawashima T."/>
            <person name="Kojima M."/>
            <person name="Kondo S."/>
            <person name="Konno H."/>
            <person name="Nakano K."/>
            <person name="Ninomiya N."/>
            <person name="Nishio T."/>
            <person name="Okada M."/>
            <person name="Plessy C."/>
            <person name="Shibata K."/>
            <person name="Shiraki T."/>
            <person name="Suzuki S."/>
            <person name="Tagami M."/>
            <person name="Waki K."/>
            <person name="Watahiki A."/>
            <person name="Okamura-Oho Y."/>
            <person name="Suzuki H."/>
            <person name="Kawai J."/>
            <person name="Hayashizaki Y."/>
        </authorList>
    </citation>
    <scope>NUCLEOTIDE SEQUENCE [LARGE SCALE MRNA]</scope>
    <source>
        <strain>C57BL/6J</strain>
    </source>
</reference>
<reference key="2">
    <citation type="journal article" date="2004" name="Genome Res.">
        <title>The status, quality, and expansion of the NIH full-length cDNA project: the Mammalian Gene Collection (MGC).</title>
        <authorList>
            <consortium name="The MGC Project Team"/>
        </authorList>
    </citation>
    <scope>NUCLEOTIDE SEQUENCE [LARGE SCALE MRNA]</scope>
    <source>
        <tissue>Brain</tissue>
    </source>
</reference>
<organism>
    <name type="scientific">Mus musculus</name>
    <name type="common">Mouse</name>
    <dbReference type="NCBI Taxonomy" id="10090"/>
    <lineage>
        <taxon>Eukaryota</taxon>
        <taxon>Metazoa</taxon>
        <taxon>Chordata</taxon>
        <taxon>Craniata</taxon>
        <taxon>Vertebrata</taxon>
        <taxon>Euteleostomi</taxon>
        <taxon>Mammalia</taxon>
        <taxon>Eutheria</taxon>
        <taxon>Euarchontoglires</taxon>
        <taxon>Glires</taxon>
        <taxon>Rodentia</taxon>
        <taxon>Myomorpha</taxon>
        <taxon>Muroidea</taxon>
        <taxon>Muridae</taxon>
        <taxon>Murinae</taxon>
        <taxon>Mus</taxon>
        <taxon>Mus</taxon>
    </lineage>
</organism>
<name>PRS38_MOUSE</name>
<accession>Q3UKY7</accession>
<accession>B9EJM8</accession>
<proteinExistence type="evidence at transcript level"/>
<keyword id="KW-1015">Disulfide bond</keyword>
<keyword id="KW-0325">Glycoprotein</keyword>
<keyword id="KW-0378">Hydrolase</keyword>
<keyword id="KW-0645">Protease</keyword>
<keyword id="KW-1185">Reference proteome</keyword>
<keyword id="KW-0964">Secreted</keyword>
<keyword id="KW-0720">Serine protease</keyword>
<keyword id="KW-0732">Signal</keyword>
<feature type="signal peptide" evidence="2">
    <location>
        <begin position="1"/>
        <end position="28"/>
    </location>
</feature>
<feature type="propeptide" id="PRO_0000328822" description="Activation peptide" evidence="2">
    <location>
        <begin position="29"/>
        <end position="55"/>
    </location>
</feature>
<feature type="chain" id="PRO_0000328823" description="Serine protease 38">
    <location>
        <begin position="56"/>
        <end position="322"/>
    </location>
</feature>
<feature type="domain" description="Peptidase S1" evidence="3">
    <location>
        <begin position="56"/>
        <end position="289"/>
    </location>
</feature>
<feature type="active site" description="Charge relay system" evidence="1">
    <location>
        <position position="96"/>
    </location>
</feature>
<feature type="active site" description="Charge relay system" evidence="1">
    <location>
        <position position="146"/>
    </location>
</feature>
<feature type="active site" description="Charge relay system" evidence="1">
    <location>
        <position position="241"/>
    </location>
</feature>
<feature type="glycosylation site" description="N-linked (GlcNAc...) asparagine" evidence="2">
    <location>
        <position position="176"/>
    </location>
</feature>
<feature type="glycosylation site" description="N-linked (GlcNAc...) asparagine" evidence="2">
    <location>
        <position position="250"/>
    </location>
</feature>
<feature type="glycosylation site" description="N-linked (GlcNAc...) asparagine" evidence="2">
    <location>
        <position position="276"/>
    </location>
</feature>
<feature type="disulfide bond" evidence="3">
    <location>
        <begin position="81"/>
        <end position="97"/>
    </location>
</feature>
<feature type="disulfide bond" evidence="3">
    <location>
        <begin position="179"/>
        <end position="247"/>
    </location>
</feature>
<feature type="disulfide bond" evidence="3">
    <location>
        <begin position="210"/>
        <end position="226"/>
    </location>
</feature>
<feature type="disulfide bond" evidence="3">
    <location>
        <begin position="237"/>
        <end position="265"/>
    </location>
</feature>